<evidence type="ECO:0000255" key="1">
    <source>
        <dbReference type="HAMAP-Rule" id="MF_00542"/>
    </source>
</evidence>
<feature type="chain" id="PRO_1000128903" description="Probable butyrate kinase">
    <location>
        <begin position="1"/>
        <end position="355"/>
    </location>
</feature>
<proteinExistence type="inferred from homology"/>
<comment type="catalytic activity">
    <reaction evidence="1">
        <text>butanoate + ATP = butanoyl phosphate + ADP</text>
        <dbReference type="Rhea" id="RHEA:13585"/>
        <dbReference type="ChEBI" id="CHEBI:17968"/>
        <dbReference type="ChEBI" id="CHEBI:30616"/>
        <dbReference type="ChEBI" id="CHEBI:58079"/>
        <dbReference type="ChEBI" id="CHEBI:456216"/>
        <dbReference type="EC" id="2.7.2.7"/>
    </reaction>
</comment>
<comment type="subcellular location">
    <subcellularLocation>
        <location evidence="1">Cytoplasm</location>
    </subcellularLocation>
</comment>
<comment type="similarity">
    <text evidence="1">Belongs to the acetokinase family.</text>
</comment>
<accession>B2TIN4</accession>
<organism>
    <name type="scientific">Clostridium botulinum (strain Eklund 17B / Type B)</name>
    <dbReference type="NCBI Taxonomy" id="935198"/>
    <lineage>
        <taxon>Bacteria</taxon>
        <taxon>Bacillati</taxon>
        <taxon>Bacillota</taxon>
        <taxon>Clostridia</taxon>
        <taxon>Eubacteriales</taxon>
        <taxon>Clostridiaceae</taxon>
        <taxon>Clostridium</taxon>
    </lineage>
</organism>
<protein>
    <recommendedName>
        <fullName evidence="1">Probable butyrate kinase</fullName>
        <shortName evidence="1">BK</shortName>
        <ecNumber evidence="1">2.7.2.7</ecNumber>
    </recommendedName>
    <alternativeName>
        <fullName evidence="1">Branched-chain carboxylic acid kinase</fullName>
    </alternativeName>
</protein>
<dbReference type="EC" id="2.7.2.7" evidence="1"/>
<dbReference type="EMBL" id="CP001056">
    <property type="protein sequence ID" value="ACD21995.1"/>
    <property type="molecule type" value="Genomic_DNA"/>
</dbReference>
<dbReference type="SMR" id="B2TIN4"/>
<dbReference type="KEGG" id="cbk:CLL_A0297"/>
<dbReference type="PATRIC" id="fig|935198.13.peg.272"/>
<dbReference type="HOGENOM" id="CLU_048716_0_0_9"/>
<dbReference type="Proteomes" id="UP000001195">
    <property type="component" value="Chromosome"/>
</dbReference>
<dbReference type="GO" id="GO:0005737">
    <property type="term" value="C:cytoplasm"/>
    <property type="evidence" value="ECO:0007669"/>
    <property type="project" value="UniProtKB-SubCell"/>
</dbReference>
<dbReference type="GO" id="GO:0008776">
    <property type="term" value="F:acetate kinase activity"/>
    <property type="evidence" value="ECO:0007669"/>
    <property type="project" value="TreeGrafter"/>
</dbReference>
<dbReference type="GO" id="GO:0005524">
    <property type="term" value="F:ATP binding"/>
    <property type="evidence" value="ECO:0007669"/>
    <property type="project" value="UniProtKB-KW"/>
</dbReference>
<dbReference type="GO" id="GO:0047761">
    <property type="term" value="F:butyrate kinase activity"/>
    <property type="evidence" value="ECO:0007669"/>
    <property type="project" value="UniProtKB-UniRule"/>
</dbReference>
<dbReference type="GO" id="GO:0006083">
    <property type="term" value="P:acetate metabolic process"/>
    <property type="evidence" value="ECO:0007669"/>
    <property type="project" value="TreeGrafter"/>
</dbReference>
<dbReference type="CDD" id="cd24011">
    <property type="entry name" value="ASKHA_NBD_BK"/>
    <property type="match status" value="1"/>
</dbReference>
<dbReference type="Gene3D" id="3.30.420.40">
    <property type="match status" value="2"/>
</dbReference>
<dbReference type="HAMAP" id="MF_00542">
    <property type="entry name" value="Butyrate_kinase"/>
    <property type="match status" value="1"/>
</dbReference>
<dbReference type="InterPro" id="IPR000890">
    <property type="entry name" value="Aliphatic_acid_kin_short-chain"/>
</dbReference>
<dbReference type="InterPro" id="IPR023865">
    <property type="entry name" value="Aliphatic_acid_kinase_CS"/>
</dbReference>
<dbReference type="InterPro" id="IPR043129">
    <property type="entry name" value="ATPase_NBD"/>
</dbReference>
<dbReference type="InterPro" id="IPR011245">
    <property type="entry name" value="Butyrate_kin"/>
</dbReference>
<dbReference type="NCBIfam" id="TIGR02707">
    <property type="entry name" value="butyr_kinase"/>
    <property type="match status" value="1"/>
</dbReference>
<dbReference type="NCBIfam" id="NF002834">
    <property type="entry name" value="PRK03011.1-5"/>
    <property type="match status" value="1"/>
</dbReference>
<dbReference type="PANTHER" id="PTHR21060">
    <property type="entry name" value="ACETATE KINASE"/>
    <property type="match status" value="1"/>
</dbReference>
<dbReference type="PANTHER" id="PTHR21060:SF3">
    <property type="entry name" value="BUTYRATE KINASE 2-RELATED"/>
    <property type="match status" value="1"/>
</dbReference>
<dbReference type="Pfam" id="PF00871">
    <property type="entry name" value="Acetate_kinase"/>
    <property type="match status" value="1"/>
</dbReference>
<dbReference type="PIRSF" id="PIRSF036458">
    <property type="entry name" value="Butyrate_kin"/>
    <property type="match status" value="1"/>
</dbReference>
<dbReference type="PRINTS" id="PR00471">
    <property type="entry name" value="ACETATEKNASE"/>
</dbReference>
<dbReference type="SUPFAM" id="SSF53067">
    <property type="entry name" value="Actin-like ATPase domain"/>
    <property type="match status" value="2"/>
</dbReference>
<dbReference type="PROSITE" id="PS01075">
    <property type="entry name" value="ACETATE_KINASE_1"/>
    <property type="match status" value="1"/>
</dbReference>
<dbReference type="PROSITE" id="PS01076">
    <property type="entry name" value="ACETATE_KINASE_2"/>
    <property type="match status" value="1"/>
</dbReference>
<name>BUK_CLOBB</name>
<keyword id="KW-0067">ATP-binding</keyword>
<keyword id="KW-0963">Cytoplasm</keyword>
<keyword id="KW-0418">Kinase</keyword>
<keyword id="KW-0547">Nucleotide-binding</keyword>
<keyword id="KW-0808">Transferase</keyword>
<gene>
    <name evidence="1" type="primary">buk</name>
    <name type="ordered locus">CLL_A0297</name>
</gene>
<reference key="1">
    <citation type="submission" date="2008-04" db="EMBL/GenBank/DDBJ databases">
        <title>Complete sequence of Clostridium botulinum strain Eklund.</title>
        <authorList>
            <person name="Brinkac L.M."/>
            <person name="Brown J.L."/>
            <person name="Bruce D."/>
            <person name="Detter C."/>
            <person name="Munk C."/>
            <person name="Smith L.A."/>
            <person name="Smith T.J."/>
            <person name="Sutton G."/>
            <person name="Brettin T.S."/>
        </authorList>
    </citation>
    <scope>NUCLEOTIDE SEQUENCE [LARGE SCALE GENOMIC DNA]</scope>
    <source>
        <strain>Eklund 17B / Type B</strain>
    </source>
</reference>
<sequence>MSYKLLIINPGSTSTKIGVYENEKELFEETLRHTNEEIKRYETIYDQFQFRKDVILNILKEKNFDITTLSAIVGRGGMLKPVEGGTYAVNDAMIEDLKVGVQGPHASNLGGIIAKSIGDELNIPSFIVDPVVTDELDDVARLSGVPELPRKSKFHALNQKAVAKRYGKDSGKGYENLNLIVVHMGGGVSVGAHKQGKVVDVNNALDGDGPFSPERAGTVPVGDLIKMCFSGQYTESEVYTKVVGKGGFVGYLNTNDVKGVIDNMEAGDKDCEKIYKAFLYQITKTIGEMAAALNGKVDQILLTGGIAYSPTLVPDLKSNVEWIAPVTVYPGEDELLALAQGAIRVLDGEEKAKIY</sequence>